<proteinExistence type="inferred from homology"/>
<reference key="1">
    <citation type="journal article" date="1997" name="Infect. Immun.">
        <title>Genetic and biochemical analyses of Actinobacillus pleuropneumoniae urease.</title>
        <authorList>
            <person name="Bosse J.T."/>
            <person name="Macinnes J.I."/>
        </authorList>
    </citation>
    <scope>NUCLEOTIDE SEQUENCE [GENOMIC DNA]</scope>
    <source>
        <strain>CM5 / Serotype 1</strain>
    </source>
</reference>
<evidence type="ECO:0000255" key="1">
    <source>
        <dbReference type="HAMAP-Rule" id="MF_01384"/>
    </source>
</evidence>
<sequence>MQSKLLLSTKLTSQGKTQLDQYFVSPPFKVMTLPAYDDAWQNGLNAMQMSSSPGLLASDLLDIEISLADDTALSLNTQAFTRVQSMNEGDYATQKTCIKLGKNSRLFYLPHPLVLHKDSSFKQTTEIEMSEQSELIYGEIVAIGRVLNGERFAFRHFASYLRISYQNRPIIADRIQWLPAKMALTSLSQMEDFSHQGSLTYVNLAKNAVEIKAMVSELQALAAEQKNMLIGVSQLNEGGLMVRVLAHRADIIQHLFERIGQVLKAQSNIV</sequence>
<protein>
    <recommendedName>
        <fullName evidence="1">Urease accessory protein UreD</fullName>
    </recommendedName>
</protein>
<gene>
    <name evidence="1" type="primary">ureD</name>
</gene>
<keyword id="KW-0143">Chaperone</keyword>
<keyword id="KW-0963">Cytoplasm</keyword>
<keyword id="KW-0996">Nickel insertion</keyword>
<dbReference type="EMBL" id="U89957">
    <property type="protein sequence ID" value="AAC00065.1"/>
    <property type="molecule type" value="Genomic_DNA"/>
</dbReference>
<dbReference type="RefSeq" id="WP_005598991.1">
    <property type="nucleotide sequence ID" value="NZ_LS483358.1"/>
</dbReference>
<dbReference type="SMR" id="O54425"/>
<dbReference type="GO" id="GO:0005737">
    <property type="term" value="C:cytoplasm"/>
    <property type="evidence" value="ECO:0007669"/>
    <property type="project" value="UniProtKB-SubCell"/>
</dbReference>
<dbReference type="GO" id="GO:0016151">
    <property type="term" value="F:nickel cation binding"/>
    <property type="evidence" value="ECO:0007669"/>
    <property type="project" value="UniProtKB-UniRule"/>
</dbReference>
<dbReference type="HAMAP" id="MF_01384">
    <property type="entry name" value="UreD"/>
    <property type="match status" value="1"/>
</dbReference>
<dbReference type="InterPro" id="IPR002669">
    <property type="entry name" value="UreD"/>
</dbReference>
<dbReference type="PANTHER" id="PTHR33643">
    <property type="entry name" value="UREASE ACCESSORY PROTEIN D"/>
    <property type="match status" value="1"/>
</dbReference>
<dbReference type="PANTHER" id="PTHR33643:SF1">
    <property type="entry name" value="UREASE ACCESSORY PROTEIN D"/>
    <property type="match status" value="1"/>
</dbReference>
<dbReference type="Pfam" id="PF01774">
    <property type="entry name" value="UreD"/>
    <property type="match status" value="1"/>
</dbReference>
<comment type="function">
    <text evidence="1">Required for maturation of urease via the functional incorporation of the urease nickel metallocenter.</text>
</comment>
<comment type="subunit">
    <text evidence="1">UreD, UreF and UreG form a complex that acts as a GTP-hydrolysis-dependent molecular chaperone, activating the urease apoprotein by helping to assemble the nickel containing metallocenter of UreC. The UreE protein probably delivers the nickel.</text>
</comment>
<comment type="subcellular location">
    <subcellularLocation>
        <location evidence="1">Cytoplasm</location>
    </subcellularLocation>
</comment>
<comment type="similarity">
    <text evidence="1">Belongs to the UreD family.</text>
</comment>
<name>URED_ACTPL</name>
<accession>O54425</accession>
<feature type="chain" id="PRO_0000067602" description="Urease accessory protein UreD">
    <location>
        <begin position="1"/>
        <end position="270"/>
    </location>
</feature>
<organism>
    <name type="scientific">Actinobacillus pleuropneumoniae</name>
    <name type="common">Haemophilus pleuropneumoniae</name>
    <dbReference type="NCBI Taxonomy" id="715"/>
    <lineage>
        <taxon>Bacteria</taxon>
        <taxon>Pseudomonadati</taxon>
        <taxon>Pseudomonadota</taxon>
        <taxon>Gammaproteobacteria</taxon>
        <taxon>Pasteurellales</taxon>
        <taxon>Pasteurellaceae</taxon>
        <taxon>Actinobacillus</taxon>
    </lineage>
</organism>